<organism>
    <name type="scientific">Buchnera aphidicola subsp. Cinara cedri (strain Cc)</name>
    <dbReference type="NCBI Taxonomy" id="372461"/>
    <lineage>
        <taxon>Bacteria</taxon>
        <taxon>Pseudomonadati</taxon>
        <taxon>Pseudomonadota</taxon>
        <taxon>Gammaproteobacteria</taxon>
        <taxon>Enterobacterales</taxon>
        <taxon>Erwiniaceae</taxon>
        <taxon>Buchnera</taxon>
    </lineage>
</organism>
<name>RL35_BUCCC</name>
<feature type="chain" id="PRO_1000050664" description="Large ribosomal subunit protein bL35">
    <location>
        <begin position="1"/>
        <end position="65"/>
    </location>
</feature>
<sequence>MPKIKTLRSASKRFKKTASGLFKRKKANLRHILTKKNTNYKRCLRKKIILSLSDYKKVLLFLPYL</sequence>
<reference key="1">
    <citation type="journal article" date="2006" name="Science">
        <title>A small microbial genome: the end of a long symbiotic relationship?</title>
        <authorList>
            <person name="Perez-Brocal V."/>
            <person name="Gil R."/>
            <person name="Ramos S."/>
            <person name="Lamelas A."/>
            <person name="Postigo M."/>
            <person name="Michelena J.M."/>
            <person name="Silva F.J."/>
            <person name="Moya A."/>
            <person name="Latorre A."/>
        </authorList>
    </citation>
    <scope>NUCLEOTIDE SEQUENCE [LARGE SCALE GENOMIC DNA]</scope>
    <source>
        <strain>Cc</strain>
    </source>
</reference>
<dbReference type="EMBL" id="CP000263">
    <property type="protein sequence ID" value="ABJ90557.1"/>
    <property type="molecule type" value="Genomic_DNA"/>
</dbReference>
<dbReference type="RefSeq" id="WP_011672476.1">
    <property type="nucleotide sequence ID" value="NC_008513.1"/>
</dbReference>
<dbReference type="SMR" id="Q057Z2"/>
<dbReference type="STRING" id="372461.BCc_080"/>
<dbReference type="KEGG" id="bcc:BCc_080"/>
<dbReference type="eggNOG" id="COG0291">
    <property type="taxonomic scope" value="Bacteria"/>
</dbReference>
<dbReference type="HOGENOM" id="CLU_169643_1_1_6"/>
<dbReference type="OrthoDB" id="47476at2"/>
<dbReference type="Proteomes" id="UP000000669">
    <property type="component" value="Chromosome"/>
</dbReference>
<dbReference type="GO" id="GO:0022625">
    <property type="term" value="C:cytosolic large ribosomal subunit"/>
    <property type="evidence" value="ECO:0007669"/>
    <property type="project" value="TreeGrafter"/>
</dbReference>
<dbReference type="GO" id="GO:0003735">
    <property type="term" value="F:structural constituent of ribosome"/>
    <property type="evidence" value="ECO:0007669"/>
    <property type="project" value="InterPro"/>
</dbReference>
<dbReference type="GO" id="GO:0006412">
    <property type="term" value="P:translation"/>
    <property type="evidence" value="ECO:0007669"/>
    <property type="project" value="UniProtKB-UniRule"/>
</dbReference>
<dbReference type="FunFam" id="4.10.410.60:FF:000001">
    <property type="entry name" value="50S ribosomal protein L35"/>
    <property type="match status" value="1"/>
</dbReference>
<dbReference type="Gene3D" id="4.10.410.60">
    <property type="match status" value="1"/>
</dbReference>
<dbReference type="HAMAP" id="MF_00514">
    <property type="entry name" value="Ribosomal_bL35"/>
    <property type="match status" value="1"/>
</dbReference>
<dbReference type="InterPro" id="IPR001706">
    <property type="entry name" value="Ribosomal_bL35"/>
</dbReference>
<dbReference type="InterPro" id="IPR021137">
    <property type="entry name" value="Ribosomal_bL35-like"/>
</dbReference>
<dbReference type="InterPro" id="IPR018265">
    <property type="entry name" value="Ribosomal_bL35_CS"/>
</dbReference>
<dbReference type="InterPro" id="IPR037229">
    <property type="entry name" value="Ribosomal_bL35_sf"/>
</dbReference>
<dbReference type="NCBIfam" id="TIGR00001">
    <property type="entry name" value="rpmI_bact"/>
    <property type="match status" value="1"/>
</dbReference>
<dbReference type="PANTHER" id="PTHR33343">
    <property type="entry name" value="54S RIBOSOMAL PROTEIN BL35M"/>
    <property type="match status" value="1"/>
</dbReference>
<dbReference type="PANTHER" id="PTHR33343:SF1">
    <property type="entry name" value="LARGE RIBOSOMAL SUBUNIT PROTEIN BL35M"/>
    <property type="match status" value="1"/>
</dbReference>
<dbReference type="Pfam" id="PF01632">
    <property type="entry name" value="Ribosomal_L35p"/>
    <property type="match status" value="1"/>
</dbReference>
<dbReference type="PRINTS" id="PR00064">
    <property type="entry name" value="RIBOSOMALL35"/>
</dbReference>
<dbReference type="SUPFAM" id="SSF143034">
    <property type="entry name" value="L35p-like"/>
    <property type="match status" value="1"/>
</dbReference>
<dbReference type="PROSITE" id="PS00936">
    <property type="entry name" value="RIBOSOMAL_L35"/>
    <property type="match status" value="1"/>
</dbReference>
<accession>Q057Z2</accession>
<protein>
    <recommendedName>
        <fullName evidence="1">Large ribosomal subunit protein bL35</fullName>
    </recommendedName>
    <alternativeName>
        <fullName evidence="2">50S ribosomal protein L35</fullName>
    </alternativeName>
</protein>
<keyword id="KW-1185">Reference proteome</keyword>
<keyword id="KW-0687">Ribonucleoprotein</keyword>
<keyword id="KW-0689">Ribosomal protein</keyword>
<comment type="similarity">
    <text evidence="1">Belongs to the bacterial ribosomal protein bL35 family.</text>
</comment>
<gene>
    <name evidence="1" type="primary">rpmI</name>
    <name type="ordered locus">BCc_080</name>
</gene>
<evidence type="ECO:0000255" key="1">
    <source>
        <dbReference type="HAMAP-Rule" id="MF_00514"/>
    </source>
</evidence>
<evidence type="ECO:0000305" key="2"/>
<proteinExistence type="inferred from homology"/>